<organism>
    <name type="scientific">Bacillus thuringiensis subsp. konkukian (strain 97-27)</name>
    <dbReference type="NCBI Taxonomy" id="281309"/>
    <lineage>
        <taxon>Bacteria</taxon>
        <taxon>Bacillati</taxon>
        <taxon>Bacillota</taxon>
        <taxon>Bacilli</taxon>
        <taxon>Bacillales</taxon>
        <taxon>Bacillaceae</taxon>
        <taxon>Bacillus</taxon>
        <taxon>Bacillus cereus group</taxon>
    </lineage>
</organism>
<proteinExistence type="inferred from homology"/>
<protein>
    <recommendedName>
        <fullName evidence="1">Formate--tetrahydrofolate ligase</fullName>
        <ecNumber evidence="1">6.3.4.3</ecNumber>
    </recommendedName>
    <alternativeName>
        <fullName evidence="1">Formyltetrahydrofolate synthetase</fullName>
        <shortName evidence="1">FHS</shortName>
        <shortName evidence="1">FTHFS</shortName>
    </alternativeName>
</protein>
<evidence type="ECO:0000255" key="1">
    <source>
        <dbReference type="HAMAP-Rule" id="MF_01543"/>
    </source>
</evidence>
<reference key="1">
    <citation type="journal article" date="2006" name="J. Bacteriol.">
        <title>Pathogenomic sequence analysis of Bacillus cereus and Bacillus thuringiensis isolates closely related to Bacillus anthracis.</title>
        <authorList>
            <person name="Han C.S."/>
            <person name="Xie G."/>
            <person name="Challacombe J.F."/>
            <person name="Altherr M.R."/>
            <person name="Bhotika S.S."/>
            <person name="Bruce D."/>
            <person name="Campbell C.S."/>
            <person name="Campbell M.L."/>
            <person name="Chen J."/>
            <person name="Chertkov O."/>
            <person name="Cleland C."/>
            <person name="Dimitrijevic M."/>
            <person name="Doggett N.A."/>
            <person name="Fawcett J.J."/>
            <person name="Glavina T."/>
            <person name="Goodwin L.A."/>
            <person name="Hill K.K."/>
            <person name="Hitchcock P."/>
            <person name="Jackson P.J."/>
            <person name="Keim P."/>
            <person name="Kewalramani A.R."/>
            <person name="Longmire J."/>
            <person name="Lucas S."/>
            <person name="Malfatti S."/>
            <person name="McMurry K."/>
            <person name="Meincke L.J."/>
            <person name="Misra M."/>
            <person name="Moseman B.L."/>
            <person name="Mundt M."/>
            <person name="Munk A.C."/>
            <person name="Okinaka R.T."/>
            <person name="Parson-Quintana B."/>
            <person name="Reilly L.P."/>
            <person name="Richardson P."/>
            <person name="Robinson D.L."/>
            <person name="Rubin E."/>
            <person name="Saunders E."/>
            <person name="Tapia R."/>
            <person name="Tesmer J.G."/>
            <person name="Thayer N."/>
            <person name="Thompson L.S."/>
            <person name="Tice H."/>
            <person name="Ticknor L.O."/>
            <person name="Wills P.L."/>
            <person name="Brettin T.S."/>
            <person name="Gilna P."/>
        </authorList>
    </citation>
    <scope>NUCLEOTIDE SEQUENCE [LARGE SCALE GENOMIC DNA]</scope>
    <source>
        <strain>97-27</strain>
    </source>
</reference>
<feature type="chain" id="PRO_0000199332" description="Formate--tetrahydrofolate ligase">
    <location>
        <begin position="1"/>
        <end position="562"/>
    </location>
</feature>
<feature type="binding site" evidence="1">
    <location>
        <begin position="71"/>
        <end position="78"/>
    </location>
    <ligand>
        <name>ATP</name>
        <dbReference type="ChEBI" id="CHEBI:30616"/>
    </ligand>
</feature>
<comment type="catalytic activity">
    <reaction evidence="1">
        <text>(6S)-5,6,7,8-tetrahydrofolate + formate + ATP = (6R)-10-formyltetrahydrofolate + ADP + phosphate</text>
        <dbReference type="Rhea" id="RHEA:20221"/>
        <dbReference type="ChEBI" id="CHEBI:15740"/>
        <dbReference type="ChEBI" id="CHEBI:30616"/>
        <dbReference type="ChEBI" id="CHEBI:43474"/>
        <dbReference type="ChEBI" id="CHEBI:57453"/>
        <dbReference type="ChEBI" id="CHEBI:195366"/>
        <dbReference type="ChEBI" id="CHEBI:456216"/>
        <dbReference type="EC" id="6.3.4.3"/>
    </reaction>
</comment>
<comment type="pathway">
    <text evidence="1">One-carbon metabolism; tetrahydrofolate interconversion.</text>
</comment>
<comment type="similarity">
    <text evidence="1">Belongs to the formate--tetrahydrofolate ligase family.</text>
</comment>
<name>FTHS_BACHK</name>
<keyword id="KW-0067">ATP-binding</keyword>
<keyword id="KW-0436">Ligase</keyword>
<keyword id="KW-0547">Nucleotide-binding</keyword>
<keyword id="KW-0554">One-carbon metabolism</keyword>
<accession>Q6HJK9</accession>
<sequence length="562" mass="60462">MTTTTTVKSDIEIAQEASMKKIQEIAADLNILEDELEPYGHYKGKLSLDIFKRLQNEKDGKVVLVTAINPTPAGEGKSTVTVGLGQAFNKIGKKTVIALREPSLGPTMGLKGGAAGGGFSQVVPMEDINLHFTGDIHAITTANNALAAFIDNHIQQGNTLGIDTRKIVWKRCVDLNDRALRNVVIGLGGPVQGVPREDGFDITVASEIMAVFCLATDIQDLKARLSRIVVAYNFANQPVTVKDLGVEGALTLLLKDALKPNLVQTLENTPAIIHGGPFANIAHGCNSVIATTMAAKLGDYVITEAGFGADLGAEKFLDIKARAAGIKPEAVVIVATIRALKMHGGVAKDQLKEENVDALAKGMENLQKHVETIQSFGVPFVIAINKFITDTDAEVAYLQEWCNERGYAVSLTEVWEKGGQGGVDLAEKVLKEIEKGENNYAPLYELELPLEEKIRTIAQKVYGAKDIEFAPKARKQLAQYEGEGWSNLPICMAKTQYSLSDDATKLGRPSDFIVTIRELKPSIGAGFIVALTGTMLTMPGLPKQPAALQMDVNEDGKAVGLF</sequence>
<dbReference type="EC" id="6.3.4.3" evidence="1"/>
<dbReference type="EMBL" id="AE017355">
    <property type="protein sequence ID" value="AAT63477.1"/>
    <property type="molecule type" value="Genomic_DNA"/>
</dbReference>
<dbReference type="RefSeq" id="WP_001985392.1">
    <property type="nucleotide sequence ID" value="NC_005957.1"/>
</dbReference>
<dbReference type="RefSeq" id="YP_036267.1">
    <property type="nucleotide sequence ID" value="NC_005957.1"/>
</dbReference>
<dbReference type="SMR" id="Q6HJK9"/>
<dbReference type="KEGG" id="btk:BT9727_1938"/>
<dbReference type="PATRIC" id="fig|281309.8.peg.2037"/>
<dbReference type="HOGENOM" id="CLU_003601_3_3_9"/>
<dbReference type="UniPathway" id="UPA00193"/>
<dbReference type="Proteomes" id="UP000001301">
    <property type="component" value="Chromosome"/>
</dbReference>
<dbReference type="GO" id="GO:0005524">
    <property type="term" value="F:ATP binding"/>
    <property type="evidence" value="ECO:0007669"/>
    <property type="project" value="UniProtKB-UniRule"/>
</dbReference>
<dbReference type="GO" id="GO:0004329">
    <property type="term" value="F:formate-tetrahydrofolate ligase activity"/>
    <property type="evidence" value="ECO:0007669"/>
    <property type="project" value="UniProtKB-UniRule"/>
</dbReference>
<dbReference type="GO" id="GO:0035999">
    <property type="term" value="P:tetrahydrofolate interconversion"/>
    <property type="evidence" value="ECO:0007669"/>
    <property type="project" value="UniProtKB-UniRule"/>
</dbReference>
<dbReference type="CDD" id="cd00477">
    <property type="entry name" value="FTHFS"/>
    <property type="match status" value="1"/>
</dbReference>
<dbReference type="FunFam" id="3.30.1510.10:FF:000001">
    <property type="entry name" value="Formate--tetrahydrofolate ligase"/>
    <property type="match status" value="1"/>
</dbReference>
<dbReference type="FunFam" id="3.10.410.10:FF:000001">
    <property type="entry name" value="Putative formate--tetrahydrofolate ligase"/>
    <property type="match status" value="1"/>
</dbReference>
<dbReference type="Gene3D" id="3.30.1510.10">
    <property type="entry name" value="Domain 2, N(10)-formyltetrahydrofolate synthetase"/>
    <property type="match status" value="1"/>
</dbReference>
<dbReference type="Gene3D" id="3.10.410.10">
    <property type="entry name" value="Formyltetrahydrofolate synthetase, domain 3"/>
    <property type="match status" value="1"/>
</dbReference>
<dbReference type="Gene3D" id="3.40.50.300">
    <property type="entry name" value="P-loop containing nucleotide triphosphate hydrolases"/>
    <property type="match status" value="1"/>
</dbReference>
<dbReference type="HAMAP" id="MF_01543">
    <property type="entry name" value="FTHFS"/>
    <property type="match status" value="1"/>
</dbReference>
<dbReference type="InterPro" id="IPR000559">
    <property type="entry name" value="Formate_THF_ligase"/>
</dbReference>
<dbReference type="InterPro" id="IPR020628">
    <property type="entry name" value="Formate_THF_ligase_CS"/>
</dbReference>
<dbReference type="InterPro" id="IPR027417">
    <property type="entry name" value="P-loop_NTPase"/>
</dbReference>
<dbReference type="NCBIfam" id="NF010030">
    <property type="entry name" value="PRK13505.1"/>
    <property type="match status" value="1"/>
</dbReference>
<dbReference type="Pfam" id="PF01268">
    <property type="entry name" value="FTHFS"/>
    <property type="match status" value="1"/>
</dbReference>
<dbReference type="SUPFAM" id="SSF52540">
    <property type="entry name" value="P-loop containing nucleoside triphosphate hydrolases"/>
    <property type="match status" value="1"/>
</dbReference>
<dbReference type="PROSITE" id="PS00721">
    <property type="entry name" value="FTHFS_1"/>
    <property type="match status" value="1"/>
</dbReference>
<dbReference type="PROSITE" id="PS00722">
    <property type="entry name" value="FTHFS_2"/>
    <property type="match status" value="1"/>
</dbReference>
<gene>
    <name evidence="1" type="primary">fhs</name>
    <name type="ordered locus">BT9727_1938</name>
</gene>